<proteinExistence type="inferred from homology"/>
<comment type="function">
    <text evidence="1">Forms part of the ribosomal stalk, playing a central role in the interaction of the ribosome with GTP-bound translation factors.</text>
</comment>
<comment type="subunit">
    <text evidence="1">Part of the ribosomal stalk of the 50S ribosomal subunit. The N-terminus interacts with L11 and the large rRNA to form the base of the stalk. The C-terminus forms an elongated spine to which L12 dimers bind in a sequential fashion forming a multimeric L10(L12)X complex.</text>
</comment>
<comment type="similarity">
    <text evidence="1">Belongs to the universal ribosomal protein uL10 family.</text>
</comment>
<keyword id="KW-1185">Reference proteome</keyword>
<keyword id="KW-0687">Ribonucleoprotein</keyword>
<keyword id="KW-0689">Ribosomal protein</keyword>
<keyword id="KW-0694">RNA-binding</keyword>
<keyword id="KW-0699">rRNA-binding</keyword>
<sequence>MSEKAIAVKAQKVEEIADQFKAAASAVVVDPRGLTVAQSTELRHQLREEGVVLEVIKNKVLTRAAEKAGYAELNDIFAGPSAVAFSNDDAVAPARILKKFADENEALEIKGGVVDGTIANIDDINKYASLPSREGLLGQLMAEFQFSIRSFAYAVKAVQDKLEEESAAPAAEASTDAE</sequence>
<protein>
    <recommendedName>
        <fullName evidence="1">Large ribosomal subunit protein uL10</fullName>
    </recommendedName>
    <alternativeName>
        <fullName evidence="2">50S ribosomal protein L10</fullName>
    </alternativeName>
</protein>
<gene>
    <name evidence="1" type="primary">rplJ</name>
    <name type="ordered locus">LEUM_0271</name>
</gene>
<dbReference type="EMBL" id="CP000414">
    <property type="protein sequence ID" value="ABJ61398.1"/>
    <property type="molecule type" value="Genomic_DNA"/>
</dbReference>
<dbReference type="RefSeq" id="WP_011679164.1">
    <property type="nucleotide sequence ID" value="NC_008531.1"/>
</dbReference>
<dbReference type="SMR" id="Q03ZH4"/>
<dbReference type="EnsemblBacteria" id="ABJ61398">
    <property type="protein sequence ID" value="ABJ61398"/>
    <property type="gene ID" value="LEUM_0271"/>
</dbReference>
<dbReference type="GeneID" id="97504905"/>
<dbReference type="KEGG" id="lme:LEUM_0271"/>
<dbReference type="eggNOG" id="COG0244">
    <property type="taxonomic scope" value="Bacteria"/>
</dbReference>
<dbReference type="HOGENOM" id="CLU_092227_2_0_9"/>
<dbReference type="Proteomes" id="UP000000362">
    <property type="component" value="Chromosome"/>
</dbReference>
<dbReference type="GO" id="GO:1990904">
    <property type="term" value="C:ribonucleoprotein complex"/>
    <property type="evidence" value="ECO:0007669"/>
    <property type="project" value="UniProtKB-KW"/>
</dbReference>
<dbReference type="GO" id="GO:0005840">
    <property type="term" value="C:ribosome"/>
    <property type="evidence" value="ECO:0007669"/>
    <property type="project" value="UniProtKB-KW"/>
</dbReference>
<dbReference type="GO" id="GO:0070180">
    <property type="term" value="F:large ribosomal subunit rRNA binding"/>
    <property type="evidence" value="ECO:0007669"/>
    <property type="project" value="UniProtKB-UniRule"/>
</dbReference>
<dbReference type="GO" id="GO:0006412">
    <property type="term" value="P:translation"/>
    <property type="evidence" value="ECO:0007669"/>
    <property type="project" value="UniProtKB-UniRule"/>
</dbReference>
<dbReference type="CDD" id="cd05797">
    <property type="entry name" value="Ribosomal_L10"/>
    <property type="match status" value="1"/>
</dbReference>
<dbReference type="Gene3D" id="3.30.70.1730">
    <property type="match status" value="1"/>
</dbReference>
<dbReference type="HAMAP" id="MF_00362">
    <property type="entry name" value="Ribosomal_uL10"/>
    <property type="match status" value="1"/>
</dbReference>
<dbReference type="InterPro" id="IPR001790">
    <property type="entry name" value="Ribosomal_uL10"/>
</dbReference>
<dbReference type="InterPro" id="IPR043141">
    <property type="entry name" value="Ribosomal_uL10-like_sf"/>
</dbReference>
<dbReference type="InterPro" id="IPR022973">
    <property type="entry name" value="Ribosomal_uL10_bac"/>
</dbReference>
<dbReference type="InterPro" id="IPR047865">
    <property type="entry name" value="Ribosomal_uL10_bac_type"/>
</dbReference>
<dbReference type="NCBIfam" id="NF000955">
    <property type="entry name" value="PRK00099.1-1"/>
    <property type="match status" value="1"/>
</dbReference>
<dbReference type="PANTHER" id="PTHR11560">
    <property type="entry name" value="39S RIBOSOMAL PROTEIN L10, MITOCHONDRIAL"/>
    <property type="match status" value="1"/>
</dbReference>
<dbReference type="Pfam" id="PF00466">
    <property type="entry name" value="Ribosomal_L10"/>
    <property type="match status" value="1"/>
</dbReference>
<dbReference type="SUPFAM" id="SSF160369">
    <property type="entry name" value="Ribosomal protein L10-like"/>
    <property type="match status" value="1"/>
</dbReference>
<accession>Q03ZH4</accession>
<evidence type="ECO:0000255" key="1">
    <source>
        <dbReference type="HAMAP-Rule" id="MF_00362"/>
    </source>
</evidence>
<evidence type="ECO:0000305" key="2"/>
<organism>
    <name type="scientific">Leuconostoc mesenteroides subsp. mesenteroides (strain ATCC 8293 / DSM 20343 / BCRC 11652 / CCM 1803 / JCM 6124 / NCDO 523 / NBRC 100496 / NCIMB 8023 / NCTC 12954 / NRRL B-1118 / 37Y)</name>
    <dbReference type="NCBI Taxonomy" id="203120"/>
    <lineage>
        <taxon>Bacteria</taxon>
        <taxon>Bacillati</taxon>
        <taxon>Bacillota</taxon>
        <taxon>Bacilli</taxon>
        <taxon>Lactobacillales</taxon>
        <taxon>Lactobacillaceae</taxon>
        <taxon>Leuconostoc</taxon>
    </lineage>
</organism>
<name>RL10_LEUMM</name>
<reference key="1">
    <citation type="journal article" date="2006" name="Proc. Natl. Acad. Sci. U.S.A.">
        <title>Comparative genomics of the lactic acid bacteria.</title>
        <authorList>
            <person name="Makarova K.S."/>
            <person name="Slesarev A."/>
            <person name="Wolf Y.I."/>
            <person name="Sorokin A."/>
            <person name="Mirkin B."/>
            <person name="Koonin E.V."/>
            <person name="Pavlov A."/>
            <person name="Pavlova N."/>
            <person name="Karamychev V."/>
            <person name="Polouchine N."/>
            <person name="Shakhova V."/>
            <person name="Grigoriev I."/>
            <person name="Lou Y."/>
            <person name="Rohksar D."/>
            <person name="Lucas S."/>
            <person name="Huang K."/>
            <person name="Goodstein D.M."/>
            <person name="Hawkins T."/>
            <person name="Plengvidhya V."/>
            <person name="Welker D."/>
            <person name="Hughes J."/>
            <person name="Goh Y."/>
            <person name="Benson A."/>
            <person name="Baldwin K."/>
            <person name="Lee J.-H."/>
            <person name="Diaz-Muniz I."/>
            <person name="Dosti B."/>
            <person name="Smeianov V."/>
            <person name="Wechter W."/>
            <person name="Barabote R."/>
            <person name="Lorca G."/>
            <person name="Altermann E."/>
            <person name="Barrangou R."/>
            <person name="Ganesan B."/>
            <person name="Xie Y."/>
            <person name="Rawsthorne H."/>
            <person name="Tamir D."/>
            <person name="Parker C."/>
            <person name="Breidt F."/>
            <person name="Broadbent J.R."/>
            <person name="Hutkins R."/>
            <person name="O'Sullivan D."/>
            <person name="Steele J."/>
            <person name="Unlu G."/>
            <person name="Saier M.H. Jr."/>
            <person name="Klaenhammer T."/>
            <person name="Richardson P."/>
            <person name="Kozyavkin S."/>
            <person name="Weimer B.C."/>
            <person name="Mills D.A."/>
        </authorList>
    </citation>
    <scope>NUCLEOTIDE SEQUENCE [LARGE SCALE GENOMIC DNA]</scope>
    <source>
        <strain>ATCC 8293 / DSM 20343 / BCRC 11652 / CCM 1803 / JCM 6124 / NCDO 523 / NBRC 100496 / NCIMB 8023 / NCTC 12954 / NRRL B-1118 / 37Y</strain>
    </source>
</reference>
<feature type="chain" id="PRO_1000005527" description="Large ribosomal subunit protein uL10">
    <location>
        <begin position="1"/>
        <end position="178"/>
    </location>
</feature>